<organism>
    <name type="scientific">Treponema pallidum subsp. pallidum (strain SS14)</name>
    <dbReference type="NCBI Taxonomy" id="455434"/>
    <lineage>
        <taxon>Bacteria</taxon>
        <taxon>Pseudomonadati</taxon>
        <taxon>Spirochaetota</taxon>
        <taxon>Spirochaetia</taxon>
        <taxon>Spirochaetales</taxon>
        <taxon>Treponemataceae</taxon>
        <taxon>Treponema</taxon>
    </lineage>
</organism>
<protein>
    <recommendedName>
        <fullName evidence="1">Aspartate--tRNA(Asp/Asn) ligase</fullName>
        <ecNumber evidence="1">6.1.1.23</ecNumber>
    </recommendedName>
    <alternativeName>
        <fullName evidence="1">Aspartyl-tRNA synthetase</fullName>
        <shortName evidence="1">AspRS</shortName>
    </alternativeName>
    <alternativeName>
        <fullName evidence="1">Non-discriminating aspartyl-tRNA synthetase</fullName>
        <shortName evidence="1">ND-AspRS</shortName>
    </alternativeName>
</protein>
<dbReference type="EC" id="6.1.1.23" evidence="1"/>
<dbReference type="EMBL" id="CP000805">
    <property type="protein sequence ID" value="ACD71401.1"/>
    <property type="molecule type" value="Genomic_DNA"/>
</dbReference>
<dbReference type="SMR" id="B2S4M2"/>
<dbReference type="KEGG" id="tpp:TPASS_0985"/>
<dbReference type="PATRIC" id="fig|455434.6.peg.972"/>
<dbReference type="Proteomes" id="UP000001202">
    <property type="component" value="Chromosome"/>
</dbReference>
<dbReference type="GO" id="GO:0005737">
    <property type="term" value="C:cytoplasm"/>
    <property type="evidence" value="ECO:0007669"/>
    <property type="project" value="UniProtKB-SubCell"/>
</dbReference>
<dbReference type="GO" id="GO:0004815">
    <property type="term" value="F:aspartate-tRNA ligase activity"/>
    <property type="evidence" value="ECO:0007669"/>
    <property type="project" value="UniProtKB-UniRule"/>
</dbReference>
<dbReference type="GO" id="GO:0050560">
    <property type="term" value="F:aspartate-tRNA(Asn) ligase activity"/>
    <property type="evidence" value="ECO:0007669"/>
    <property type="project" value="UniProtKB-EC"/>
</dbReference>
<dbReference type="GO" id="GO:0005524">
    <property type="term" value="F:ATP binding"/>
    <property type="evidence" value="ECO:0007669"/>
    <property type="project" value="UniProtKB-UniRule"/>
</dbReference>
<dbReference type="GO" id="GO:0003676">
    <property type="term" value="F:nucleic acid binding"/>
    <property type="evidence" value="ECO:0007669"/>
    <property type="project" value="InterPro"/>
</dbReference>
<dbReference type="GO" id="GO:0006422">
    <property type="term" value="P:aspartyl-tRNA aminoacylation"/>
    <property type="evidence" value="ECO:0007669"/>
    <property type="project" value="UniProtKB-UniRule"/>
</dbReference>
<dbReference type="CDD" id="cd00777">
    <property type="entry name" value="AspRS_core"/>
    <property type="match status" value="1"/>
</dbReference>
<dbReference type="CDD" id="cd04317">
    <property type="entry name" value="EcAspRS_like_N"/>
    <property type="match status" value="1"/>
</dbReference>
<dbReference type="Gene3D" id="3.30.930.10">
    <property type="entry name" value="Bira Bifunctional Protein, Domain 2"/>
    <property type="match status" value="1"/>
</dbReference>
<dbReference type="Gene3D" id="3.30.1360.30">
    <property type="entry name" value="GAD-like domain"/>
    <property type="match status" value="1"/>
</dbReference>
<dbReference type="Gene3D" id="2.40.50.140">
    <property type="entry name" value="Nucleic acid-binding proteins"/>
    <property type="match status" value="1"/>
</dbReference>
<dbReference type="HAMAP" id="MF_00044">
    <property type="entry name" value="Asp_tRNA_synth_type1"/>
    <property type="match status" value="1"/>
</dbReference>
<dbReference type="InterPro" id="IPR004364">
    <property type="entry name" value="Aa-tRNA-synt_II"/>
</dbReference>
<dbReference type="InterPro" id="IPR006195">
    <property type="entry name" value="aa-tRNA-synth_II"/>
</dbReference>
<dbReference type="InterPro" id="IPR045864">
    <property type="entry name" value="aa-tRNA-synth_II/BPL/LPL"/>
</dbReference>
<dbReference type="InterPro" id="IPR004524">
    <property type="entry name" value="Asp-tRNA-ligase_1"/>
</dbReference>
<dbReference type="InterPro" id="IPR047089">
    <property type="entry name" value="Asp-tRNA-ligase_1_N"/>
</dbReference>
<dbReference type="InterPro" id="IPR002312">
    <property type="entry name" value="Asp/Asn-tRNA-synth_IIb"/>
</dbReference>
<dbReference type="InterPro" id="IPR047090">
    <property type="entry name" value="AspRS_core"/>
</dbReference>
<dbReference type="InterPro" id="IPR004115">
    <property type="entry name" value="GAD-like_sf"/>
</dbReference>
<dbReference type="InterPro" id="IPR029351">
    <property type="entry name" value="GAD_dom"/>
</dbReference>
<dbReference type="InterPro" id="IPR012340">
    <property type="entry name" value="NA-bd_OB-fold"/>
</dbReference>
<dbReference type="InterPro" id="IPR004365">
    <property type="entry name" value="NA-bd_OB_tRNA"/>
</dbReference>
<dbReference type="NCBIfam" id="TIGR00459">
    <property type="entry name" value="aspS_bact"/>
    <property type="match status" value="1"/>
</dbReference>
<dbReference type="NCBIfam" id="NF001750">
    <property type="entry name" value="PRK00476.1"/>
    <property type="match status" value="1"/>
</dbReference>
<dbReference type="PANTHER" id="PTHR22594:SF5">
    <property type="entry name" value="ASPARTATE--TRNA LIGASE, MITOCHONDRIAL"/>
    <property type="match status" value="1"/>
</dbReference>
<dbReference type="PANTHER" id="PTHR22594">
    <property type="entry name" value="ASPARTYL/LYSYL-TRNA SYNTHETASE"/>
    <property type="match status" value="1"/>
</dbReference>
<dbReference type="Pfam" id="PF02938">
    <property type="entry name" value="GAD"/>
    <property type="match status" value="1"/>
</dbReference>
<dbReference type="Pfam" id="PF00152">
    <property type="entry name" value="tRNA-synt_2"/>
    <property type="match status" value="1"/>
</dbReference>
<dbReference type="Pfam" id="PF01336">
    <property type="entry name" value="tRNA_anti-codon"/>
    <property type="match status" value="1"/>
</dbReference>
<dbReference type="PRINTS" id="PR01042">
    <property type="entry name" value="TRNASYNTHASP"/>
</dbReference>
<dbReference type="SUPFAM" id="SSF55681">
    <property type="entry name" value="Class II aaRS and biotin synthetases"/>
    <property type="match status" value="1"/>
</dbReference>
<dbReference type="SUPFAM" id="SSF55261">
    <property type="entry name" value="GAD domain-like"/>
    <property type="match status" value="1"/>
</dbReference>
<dbReference type="SUPFAM" id="SSF50249">
    <property type="entry name" value="Nucleic acid-binding proteins"/>
    <property type="match status" value="1"/>
</dbReference>
<dbReference type="PROSITE" id="PS50862">
    <property type="entry name" value="AA_TRNA_LIGASE_II"/>
    <property type="match status" value="1"/>
</dbReference>
<name>SYDND_TREPS</name>
<accession>B2S4M2</accession>
<evidence type="ECO:0000255" key="1">
    <source>
        <dbReference type="HAMAP-Rule" id="MF_00044"/>
    </source>
</evidence>
<comment type="function">
    <text evidence="1">Aspartyl-tRNA synthetase with relaxed tRNA specificity since it is able to aspartylate not only its cognate tRNA(Asp) but also tRNA(Asn). Reaction proceeds in two steps: L-aspartate is first activated by ATP to form Asp-AMP and then transferred to the acceptor end of tRNA(Asp/Asn).</text>
</comment>
<comment type="catalytic activity">
    <reaction evidence="1">
        <text>tRNA(Asx) + L-aspartate + ATP = L-aspartyl-tRNA(Asx) + AMP + diphosphate</text>
        <dbReference type="Rhea" id="RHEA:18349"/>
        <dbReference type="Rhea" id="RHEA-COMP:9710"/>
        <dbReference type="Rhea" id="RHEA-COMP:9711"/>
        <dbReference type="ChEBI" id="CHEBI:29991"/>
        <dbReference type="ChEBI" id="CHEBI:30616"/>
        <dbReference type="ChEBI" id="CHEBI:33019"/>
        <dbReference type="ChEBI" id="CHEBI:78442"/>
        <dbReference type="ChEBI" id="CHEBI:78516"/>
        <dbReference type="ChEBI" id="CHEBI:456215"/>
        <dbReference type="EC" id="6.1.1.23"/>
    </reaction>
</comment>
<comment type="subunit">
    <text evidence="1">Homodimer.</text>
</comment>
<comment type="subcellular location">
    <subcellularLocation>
        <location evidence="1">Cytoplasm</location>
    </subcellularLocation>
</comment>
<comment type="similarity">
    <text evidence="1">Belongs to the class-II aminoacyl-tRNA synthetase family. Type 1 subfamily.</text>
</comment>
<feature type="chain" id="PRO_1000091058" description="Aspartate--tRNA(Asp/Asn) ligase">
    <location>
        <begin position="1"/>
        <end position="602"/>
    </location>
</feature>
<feature type="region of interest" description="Aspartate" evidence="1">
    <location>
        <begin position="215"/>
        <end position="218"/>
    </location>
</feature>
<feature type="binding site" evidence="1">
    <location>
        <position position="191"/>
    </location>
    <ligand>
        <name>L-aspartate</name>
        <dbReference type="ChEBI" id="CHEBI:29991"/>
    </ligand>
</feature>
<feature type="binding site" evidence="1">
    <location>
        <begin position="237"/>
        <end position="239"/>
    </location>
    <ligand>
        <name>ATP</name>
        <dbReference type="ChEBI" id="CHEBI:30616"/>
    </ligand>
</feature>
<feature type="binding site" evidence="1">
    <location>
        <position position="237"/>
    </location>
    <ligand>
        <name>L-aspartate</name>
        <dbReference type="ChEBI" id="CHEBI:29991"/>
    </ligand>
</feature>
<feature type="binding site" evidence="1">
    <location>
        <position position="246"/>
    </location>
    <ligand>
        <name>ATP</name>
        <dbReference type="ChEBI" id="CHEBI:30616"/>
    </ligand>
</feature>
<feature type="binding site" evidence="1">
    <location>
        <position position="465"/>
    </location>
    <ligand>
        <name>L-aspartate</name>
        <dbReference type="ChEBI" id="CHEBI:29991"/>
    </ligand>
</feature>
<feature type="binding site" evidence="1">
    <location>
        <position position="499"/>
    </location>
    <ligand>
        <name>ATP</name>
        <dbReference type="ChEBI" id="CHEBI:30616"/>
    </ligand>
</feature>
<feature type="binding site" evidence="1">
    <location>
        <position position="506"/>
    </location>
    <ligand>
        <name>L-aspartate</name>
        <dbReference type="ChEBI" id="CHEBI:29991"/>
    </ligand>
</feature>
<feature type="binding site" evidence="1">
    <location>
        <begin position="551"/>
        <end position="554"/>
    </location>
    <ligand>
        <name>ATP</name>
        <dbReference type="ChEBI" id="CHEBI:30616"/>
    </ligand>
</feature>
<feature type="site" description="Important for tRNA non-discrimination" evidence="1">
    <location>
        <position position="47"/>
    </location>
</feature>
<reference key="1">
    <citation type="journal article" date="2008" name="BMC Microbiol.">
        <title>Complete genome sequence of Treponema pallidum ssp. pallidum strain SS14 determined with oligonucleotide arrays.</title>
        <authorList>
            <person name="Matejkova P."/>
            <person name="Strouhal M."/>
            <person name="Smajs D."/>
            <person name="Norris S.J."/>
            <person name="Palzkill T."/>
            <person name="Petrosino J.F."/>
            <person name="Sodergren E."/>
            <person name="Norton J.E."/>
            <person name="Singh J."/>
            <person name="Richmond T.A."/>
            <person name="Molla M.N."/>
            <person name="Albert T.J."/>
            <person name="Weinstock G.M."/>
        </authorList>
    </citation>
    <scope>NUCLEOTIDE SEQUENCE [LARGE SCALE GENOMIC DNA]</scope>
    <source>
        <strain>SS14</strain>
    </source>
</reference>
<gene>
    <name evidence="1" type="primary">aspS</name>
    <name type="ordered locus">TPASS_0985</name>
</gene>
<proteinExistence type="inferred from homology"/>
<keyword id="KW-0030">Aminoacyl-tRNA synthetase</keyword>
<keyword id="KW-0067">ATP-binding</keyword>
<keyword id="KW-0963">Cytoplasm</keyword>
<keyword id="KW-0436">Ligase</keyword>
<keyword id="KW-0547">Nucleotide-binding</keyword>
<keyword id="KW-0648">Protein biosynthesis</keyword>
<sequence length="602" mass="68627">MYSAHTPWYDGQVMDYPRRTIACGELRRCHVGTVVVLNGWVHRKRSHGTVSFFNMRDRSGIVQVIVSQEENASLWSTVNRIRLECCLAVEGVVRERPPSMINRALHTGEVEVHARTLYVLSENAVLPFRVDDVVHAHEDIRLKYRYLDLRSQRMQERIALRSRVALAIRQFLSMKGFIEIETPTFICSTPEGARDFVVPSRVCPGRFYALPQSPQLYKQLLMVAGFDRYFQLARCYRDEDARGDRQPEFTQIDLEMSFVSRDDVMRVNEDMLRYVFRTSIGVELPTFFPRLTYAQALDQYGTDKPDMRFKPVLQNADFMGMLGTFTPFEEVVAQGGSIRALVLPGKARCYSRRQIEALESIARAHEAHHLFWLKATGGGLEGGIARFFAGVESEVRRRLSAQDEDLLLFVADCRHRVCCVALGAVRSALIRDESFPEKELFSFVWIVDFPLFEWNPAENKWDPAHHMFSAPQEQYLETLEQDPGSVKGDLYDLVLNGYELASGSIRIHDTQLQKRIFKIVGLDPEEAGEKFGFLTEAFKYGAPPHGGIAHGLDRLVMLMTGSESIRDVIAFPKNTLAASPLDNCPSVLDKRQLDELHLTVHV</sequence>